<accession>Q9HE10</accession>
<feature type="chain" id="PRO_0000350755" description="DSC E3 ubiquitin ligase complex subunit 3">
    <location>
        <begin position="1"/>
        <end position="250"/>
    </location>
</feature>
<feature type="transmembrane region" description="Helical" evidence="1">
    <location>
        <begin position="199"/>
        <end position="219"/>
    </location>
</feature>
<feature type="transmembrane region" description="Helical" evidence="1">
    <location>
        <begin position="228"/>
        <end position="248"/>
    </location>
</feature>
<feature type="region of interest" description="Disordered" evidence="2">
    <location>
        <begin position="105"/>
        <end position="130"/>
    </location>
</feature>
<feature type="compositionally biased region" description="Polar residues" evidence="2">
    <location>
        <begin position="107"/>
        <end position="130"/>
    </location>
</feature>
<feature type="glycosylation site" description="N-linked (GlcNAc...) asparagine" evidence="1">
    <location>
        <position position="187"/>
    </location>
</feature>
<evidence type="ECO:0000255" key="1"/>
<evidence type="ECO:0000256" key="2">
    <source>
        <dbReference type="SAM" id="MobiDB-lite"/>
    </source>
</evidence>
<evidence type="ECO:0000269" key="3">
    <source>
    </source>
</evidence>
<evidence type="ECO:0000269" key="4">
    <source>
    </source>
</evidence>
<evidence type="ECO:0000305" key="5"/>
<reference key="1">
    <citation type="journal article" date="2002" name="Nature">
        <title>The genome sequence of Schizosaccharomyces pombe.</title>
        <authorList>
            <person name="Wood V."/>
            <person name="Gwilliam R."/>
            <person name="Rajandream M.A."/>
            <person name="Lyne M.H."/>
            <person name="Lyne R."/>
            <person name="Stewart A."/>
            <person name="Sgouros J.G."/>
            <person name="Peat N."/>
            <person name="Hayles J."/>
            <person name="Baker S.G."/>
            <person name="Basham D."/>
            <person name="Bowman S."/>
            <person name="Brooks K."/>
            <person name="Brown D."/>
            <person name="Brown S."/>
            <person name="Chillingworth T."/>
            <person name="Churcher C.M."/>
            <person name="Collins M."/>
            <person name="Connor R."/>
            <person name="Cronin A."/>
            <person name="Davis P."/>
            <person name="Feltwell T."/>
            <person name="Fraser A."/>
            <person name="Gentles S."/>
            <person name="Goble A."/>
            <person name="Hamlin N."/>
            <person name="Harris D.E."/>
            <person name="Hidalgo J."/>
            <person name="Hodgson G."/>
            <person name="Holroyd S."/>
            <person name="Hornsby T."/>
            <person name="Howarth S."/>
            <person name="Huckle E.J."/>
            <person name="Hunt S."/>
            <person name="Jagels K."/>
            <person name="James K.D."/>
            <person name="Jones L."/>
            <person name="Jones M."/>
            <person name="Leather S."/>
            <person name="McDonald S."/>
            <person name="McLean J."/>
            <person name="Mooney P."/>
            <person name="Moule S."/>
            <person name="Mungall K.L."/>
            <person name="Murphy L.D."/>
            <person name="Niblett D."/>
            <person name="Odell C."/>
            <person name="Oliver K."/>
            <person name="O'Neil S."/>
            <person name="Pearson D."/>
            <person name="Quail M.A."/>
            <person name="Rabbinowitsch E."/>
            <person name="Rutherford K.M."/>
            <person name="Rutter S."/>
            <person name="Saunders D."/>
            <person name="Seeger K."/>
            <person name="Sharp S."/>
            <person name="Skelton J."/>
            <person name="Simmonds M.N."/>
            <person name="Squares R."/>
            <person name="Squares S."/>
            <person name="Stevens K."/>
            <person name="Taylor K."/>
            <person name="Taylor R.G."/>
            <person name="Tivey A."/>
            <person name="Walsh S.V."/>
            <person name="Warren T."/>
            <person name="Whitehead S."/>
            <person name="Woodward J.R."/>
            <person name="Volckaert G."/>
            <person name="Aert R."/>
            <person name="Robben J."/>
            <person name="Grymonprez B."/>
            <person name="Weltjens I."/>
            <person name="Vanstreels E."/>
            <person name="Rieger M."/>
            <person name="Schaefer M."/>
            <person name="Mueller-Auer S."/>
            <person name="Gabel C."/>
            <person name="Fuchs M."/>
            <person name="Duesterhoeft A."/>
            <person name="Fritzc C."/>
            <person name="Holzer E."/>
            <person name="Moestl D."/>
            <person name="Hilbert H."/>
            <person name="Borzym K."/>
            <person name="Langer I."/>
            <person name="Beck A."/>
            <person name="Lehrach H."/>
            <person name="Reinhardt R."/>
            <person name="Pohl T.M."/>
            <person name="Eger P."/>
            <person name="Zimmermann W."/>
            <person name="Wedler H."/>
            <person name="Wambutt R."/>
            <person name="Purnelle B."/>
            <person name="Goffeau A."/>
            <person name="Cadieu E."/>
            <person name="Dreano S."/>
            <person name="Gloux S."/>
            <person name="Lelaure V."/>
            <person name="Mottier S."/>
            <person name="Galibert F."/>
            <person name="Aves S.J."/>
            <person name="Xiang Z."/>
            <person name="Hunt C."/>
            <person name="Moore K."/>
            <person name="Hurst S.M."/>
            <person name="Lucas M."/>
            <person name="Rochet M."/>
            <person name="Gaillardin C."/>
            <person name="Tallada V.A."/>
            <person name="Garzon A."/>
            <person name="Thode G."/>
            <person name="Daga R.R."/>
            <person name="Cruzado L."/>
            <person name="Jimenez J."/>
            <person name="Sanchez M."/>
            <person name="del Rey F."/>
            <person name="Benito J."/>
            <person name="Dominguez A."/>
            <person name="Revuelta J.L."/>
            <person name="Moreno S."/>
            <person name="Armstrong J."/>
            <person name="Forsburg S.L."/>
            <person name="Cerutti L."/>
            <person name="Lowe T."/>
            <person name="McCombie W.R."/>
            <person name="Paulsen I."/>
            <person name="Potashkin J."/>
            <person name="Shpakovski G.V."/>
            <person name="Ussery D."/>
            <person name="Barrell B.G."/>
            <person name="Nurse P."/>
        </authorList>
    </citation>
    <scope>NUCLEOTIDE SEQUENCE [LARGE SCALE GENOMIC DNA]</scope>
    <source>
        <strain>972 / ATCC 24843</strain>
    </source>
</reference>
<reference key="2">
    <citation type="journal article" date="2006" name="Nat. Biotechnol.">
        <title>ORFeome cloning and global analysis of protein localization in the fission yeast Schizosaccharomyces pombe.</title>
        <authorList>
            <person name="Matsuyama A."/>
            <person name="Arai R."/>
            <person name="Yashiroda Y."/>
            <person name="Shirai A."/>
            <person name="Kamata A."/>
            <person name="Sekido S."/>
            <person name="Kobayashi Y."/>
            <person name="Hashimoto A."/>
            <person name="Hamamoto M."/>
            <person name="Hiraoka Y."/>
            <person name="Horinouchi S."/>
            <person name="Yoshida M."/>
        </authorList>
    </citation>
    <scope>SUBCELLULAR LOCATION [LARGE SCALE ANALYSIS]</scope>
</reference>
<reference key="3">
    <citation type="journal article" date="2011" name="Mol. Cell">
        <title>Yeast SREBP cleavage activation requires the Golgi Dsc E3 ligase complex.</title>
        <authorList>
            <person name="Stewart E.V."/>
            <person name="Nwosu C.C."/>
            <person name="Tong Z."/>
            <person name="Roguev A."/>
            <person name="Cummins T.D."/>
            <person name="Kim D.U."/>
            <person name="Hayles J."/>
            <person name="Park H.O."/>
            <person name="Hoe K.L."/>
            <person name="Powell D.W."/>
            <person name="Krogan N.J."/>
            <person name="Espenshade P.J."/>
        </authorList>
    </citation>
    <scope>FUNCTION</scope>
    <scope>IDENTIFICATION IN THE DCS COMPLEX</scope>
    <scope>SUBCELLULAR LOCATION</scope>
</reference>
<dbReference type="EMBL" id="CU329670">
    <property type="protein sequence ID" value="CAC19732.1"/>
    <property type="molecule type" value="Genomic_DNA"/>
</dbReference>
<dbReference type="RefSeq" id="NP_593622.1">
    <property type="nucleotide sequence ID" value="NM_001019053.2"/>
</dbReference>
<dbReference type="BioGRID" id="278474">
    <property type="interactions" value="320"/>
</dbReference>
<dbReference type="FunCoup" id="Q9HE10">
    <property type="interactions" value="6"/>
</dbReference>
<dbReference type="STRING" id="284812.Q9HE10"/>
<dbReference type="GlyCosmos" id="Q9HE10">
    <property type="glycosylation" value="1 site, No reported glycans"/>
</dbReference>
<dbReference type="PaxDb" id="4896-SPAC20H4.02.1"/>
<dbReference type="EnsemblFungi" id="SPAC20H4.02.1">
    <property type="protein sequence ID" value="SPAC20H4.02.1:pep"/>
    <property type="gene ID" value="SPAC20H4.02"/>
</dbReference>
<dbReference type="GeneID" id="2541990"/>
<dbReference type="KEGG" id="spo:2541990"/>
<dbReference type="PomBase" id="SPAC20H4.02">
    <property type="gene designation" value="dsc3"/>
</dbReference>
<dbReference type="VEuPathDB" id="FungiDB:SPAC20H4.02"/>
<dbReference type="eggNOG" id="ENOG502S5B3">
    <property type="taxonomic scope" value="Eukaryota"/>
</dbReference>
<dbReference type="HOGENOM" id="CLU_035821_1_1_1"/>
<dbReference type="InParanoid" id="Q9HE10"/>
<dbReference type="OMA" id="RIYVNCS"/>
<dbReference type="PhylomeDB" id="Q9HE10"/>
<dbReference type="UniPathway" id="UPA00143"/>
<dbReference type="PRO" id="PR:Q9HE10"/>
<dbReference type="Proteomes" id="UP000002485">
    <property type="component" value="Chromosome I"/>
</dbReference>
<dbReference type="GO" id="GO:0044695">
    <property type="term" value="C:Dsc E3 ubiquitin ligase complex"/>
    <property type="evidence" value="ECO:0000314"/>
    <property type="project" value="PomBase"/>
</dbReference>
<dbReference type="GO" id="GO:0005783">
    <property type="term" value="C:endoplasmic reticulum"/>
    <property type="evidence" value="ECO:0007005"/>
    <property type="project" value="PomBase"/>
</dbReference>
<dbReference type="GO" id="GO:0005789">
    <property type="term" value="C:endoplasmic reticulum membrane"/>
    <property type="evidence" value="ECO:0007669"/>
    <property type="project" value="UniProtKB-SubCell"/>
</dbReference>
<dbReference type="GO" id="GO:0000139">
    <property type="term" value="C:Golgi membrane"/>
    <property type="evidence" value="ECO:0007669"/>
    <property type="project" value="UniProtKB-SubCell"/>
</dbReference>
<dbReference type="GO" id="GO:0016567">
    <property type="term" value="P:protein ubiquitination"/>
    <property type="evidence" value="ECO:0007669"/>
    <property type="project" value="UniProtKB-UniPathway"/>
</dbReference>
<dbReference type="GO" id="GO:0032933">
    <property type="term" value="P:SREBP signaling pathway"/>
    <property type="evidence" value="ECO:0000315"/>
    <property type="project" value="PomBase"/>
</dbReference>
<dbReference type="InterPro" id="IPR045226">
    <property type="entry name" value="Dsc3"/>
</dbReference>
<dbReference type="InterPro" id="IPR025390">
    <property type="entry name" value="Dsc3_C"/>
</dbReference>
<dbReference type="InterPro" id="IPR019413">
    <property type="entry name" value="Dsc3_ub-like_dom"/>
</dbReference>
<dbReference type="PANTHER" id="PTHR28049:SF1">
    <property type="entry name" value="DSC E3 UBIQUITIN LIGASE COMPLEX SUBUNIT 3"/>
    <property type="match status" value="1"/>
</dbReference>
<dbReference type="PANTHER" id="PTHR28049">
    <property type="entry name" value="TRANSMEMBRANE PROTEIN YOR223W"/>
    <property type="match status" value="1"/>
</dbReference>
<dbReference type="Pfam" id="PF13373">
    <property type="entry name" value="Dsc3_C"/>
    <property type="match status" value="2"/>
</dbReference>
<dbReference type="Pfam" id="PF10302">
    <property type="entry name" value="Dsc3_N"/>
    <property type="match status" value="1"/>
</dbReference>
<name>DSC3_SCHPO</name>
<protein>
    <recommendedName>
        <fullName>DSC E3 ubiquitin ligase complex subunit 3</fullName>
    </recommendedName>
    <alternativeName>
        <fullName>Defective for SREBP cleavage protein 3</fullName>
    </alternativeName>
</protein>
<sequence>MSSSALKKWEIVIRFASSIPDLSLEISDAQTTTIHSLFKIVRNRIPECRDKQLKMVFQGRLLSPGFTVERAVRGNWQRDENDDPNIVQKAFIHCIVGPTLTEEELASQDQAQSGLNSNSESPDDLQNAQTGETLRGFDRLREAGFTETEVNNLRSQFHRLRGTNLDSLTEDAIREAEDDWIDNGGQNSSADELDMSYETLLAGVLIGFFGGAIACYFLWERTMFSLRMQLSILVGIICNFAYGLLHSYRW</sequence>
<proteinExistence type="evidence at protein level"/>
<keyword id="KW-0256">Endoplasmic reticulum</keyword>
<keyword id="KW-0325">Glycoprotein</keyword>
<keyword id="KW-0333">Golgi apparatus</keyword>
<keyword id="KW-0472">Membrane</keyword>
<keyword id="KW-1185">Reference proteome</keyword>
<keyword id="KW-0812">Transmembrane</keyword>
<keyword id="KW-1133">Transmembrane helix</keyword>
<keyword id="KW-0833">Ubl conjugation pathway</keyword>
<gene>
    <name type="primary">dsc3</name>
    <name type="ORF">SPAC20H4.02</name>
</gene>
<organism>
    <name type="scientific">Schizosaccharomyces pombe (strain 972 / ATCC 24843)</name>
    <name type="common">Fission yeast</name>
    <dbReference type="NCBI Taxonomy" id="284812"/>
    <lineage>
        <taxon>Eukaryota</taxon>
        <taxon>Fungi</taxon>
        <taxon>Dikarya</taxon>
        <taxon>Ascomycota</taxon>
        <taxon>Taphrinomycotina</taxon>
        <taxon>Schizosaccharomycetes</taxon>
        <taxon>Schizosaccharomycetales</taxon>
        <taxon>Schizosaccharomycetaceae</taxon>
        <taxon>Schizosaccharomyces</taxon>
    </lineage>
</organism>
<comment type="function">
    <text evidence="4">Component of the DSC E3 ubiquitin ligase complex which is required for the sre1 transcriptional activator proteolytic cleavage to release the soluble transcription factor from the membrane in low oxygen or sterol conditions. The complex also plays an important role in the multivesicular body (MVB) pathway and functions in a post-endoplasmic reticulum pathway for protein degradation.</text>
</comment>
<comment type="pathway">
    <text>Protein modification; protein ubiquitination.</text>
</comment>
<comment type="subunit">
    <text evidence="4">Component of the DSC E3 ubiquitin ligase complex composed of dsc1, dsc2, dsc3 and dsc4.</text>
</comment>
<comment type="subcellular location">
    <subcellularLocation>
        <location evidence="3">Endoplasmic reticulum membrane</location>
        <topology>Multi-pass membrane protein</topology>
    </subcellularLocation>
    <subcellularLocation>
        <location evidence="4">Golgi apparatus membrane</location>
        <topology>Multi-pass membrane protein</topology>
    </subcellularLocation>
</comment>
<comment type="similarity">
    <text evidence="5">Belongs to the dsc3 family.</text>
</comment>